<evidence type="ECO:0000255" key="1">
    <source>
        <dbReference type="HAMAP-Rule" id="MF_01445"/>
    </source>
</evidence>
<keyword id="KW-0012">Acyltransferase</keyword>
<keyword id="KW-0963">Cytoplasm</keyword>
<keyword id="KW-0408">Iron</keyword>
<keyword id="KW-0479">Metal-binding</keyword>
<keyword id="KW-1185">Reference proteome</keyword>
<keyword id="KW-0808">Transferase</keyword>
<keyword id="KW-0819">tRNA processing</keyword>
<sequence length="353" mass="38215">MRVLGIETSCDETGIAVYDEYRGLLVHKVYSQGVLHSRYGGVVPELAARDHIRKVIPLIVGSLKQARLISSDIDAVAYTAGPGLIGALLVGASVACSLAYAWNVPVIGVHHMEAHLLTPMLNKKLIISNSTSFSDFIDVIDFPFIALLVSGGHTQLVMVKNIGEYKILGESVDDAVGEVFDKIAVFLGLGYPGGALLSEMAQVGIKGRYIFPKPMINKPGFNFSFSGLKTAVIRAIMSSSNDQQTRADIACGFERAVVETLSVKCYKALKQMKVKYLVISGGVSANTMLRSKLLKMMYSISGKLLCPELEFCTDNGAMVAYTGLIRLKAGLSNRDLSITVKPRWSLESLPSIF</sequence>
<dbReference type="EC" id="2.3.1.234" evidence="1"/>
<dbReference type="EMBL" id="BX248583">
    <property type="protein sequence ID" value="CAD83584.1"/>
    <property type="molecule type" value="Genomic_DNA"/>
</dbReference>
<dbReference type="SMR" id="Q7VQQ9"/>
<dbReference type="STRING" id="203907.Bfl059"/>
<dbReference type="KEGG" id="bfl:Bfl059"/>
<dbReference type="eggNOG" id="COG0533">
    <property type="taxonomic scope" value="Bacteria"/>
</dbReference>
<dbReference type="HOGENOM" id="CLU_023208_0_0_6"/>
<dbReference type="OrthoDB" id="9806197at2"/>
<dbReference type="Proteomes" id="UP000002192">
    <property type="component" value="Chromosome"/>
</dbReference>
<dbReference type="GO" id="GO:0005737">
    <property type="term" value="C:cytoplasm"/>
    <property type="evidence" value="ECO:0007669"/>
    <property type="project" value="UniProtKB-SubCell"/>
</dbReference>
<dbReference type="GO" id="GO:0005506">
    <property type="term" value="F:iron ion binding"/>
    <property type="evidence" value="ECO:0007669"/>
    <property type="project" value="UniProtKB-UniRule"/>
</dbReference>
<dbReference type="GO" id="GO:0061711">
    <property type="term" value="F:N(6)-L-threonylcarbamoyladenine synthase activity"/>
    <property type="evidence" value="ECO:0007669"/>
    <property type="project" value="UniProtKB-EC"/>
</dbReference>
<dbReference type="GO" id="GO:0002949">
    <property type="term" value="P:tRNA threonylcarbamoyladenosine modification"/>
    <property type="evidence" value="ECO:0007669"/>
    <property type="project" value="UniProtKB-UniRule"/>
</dbReference>
<dbReference type="CDD" id="cd24133">
    <property type="entry name" value="ASKHA_NBD_TsaD_bac"/>
    <property type="match status" value="1"/>
</dbReference>
<dbReference type="FunFam" id="3.30.420.40:FF:000012">
    <property type="entry name" value="tRNA N6-adenosine threonylcarbamoyltransferase"/>
    <property type="match status" value="1"/>
</dbReference>
<dbReference type="FunFam" id="3.30.420.40:FF:000040">
    <property type="entry name" value="tRNA N6-adenosine threonylcarbamoyltransferase"/>
    <property type="match status" value="1"/>
</dbReference>
<dbReference type="Gene3D" id="3.30.420.40">
    <property type="match status" value="2"/>
</dbReference>
<dbReference type="HAMAP" id="MF_01445">
    <property type="entry name" value="TsaD"/>
    <property type="match status" value="1"/>
</dbReference>
<dbReference type="InterPro" id="IPR043129">
    <property type="entry name" value="ATPase_NBD"/>
</dbReference>
<dbReference type="InterPro" id="IPR000905">
    <property type="entry name" value="Gcp-like_dom"/>
</dbReference>
<dbReference type="InterPro" id="IPR017861">
    <property type="entry name" value="KAE1/TsaD"/>
</dbReference>
<dbReference type="InterPro" id="IPR017860">
    <property type="entry name" value="Peptidase_M22_CS"/>
</dbReference>
<dbReference type="InterPro" id="IPR022450">
    <property type="entry name" value="TsaD"/>
</dbReference>
<dbReference type="NCBIfam" id="TIGR00329">
    <property type="entry name" value="gcp_kae1"/>
    <property type="match status" value="1"/>
</dbReference>
<dbReference type="NCBIfam" id="TIGR03723">
    <property type="entry name" value="T6A_TsaD_YgjD"/>
    <property type="match status" value="1"/>
</dbReference>
<dbReference type="PANTHER" id="PTHR11735">
    <property type="entry name" value="TRNA N6-ADENOSINE THREONYLCARBAMOYLTRANSFERASE"/>
    <property type="match status" value="1"/>
</dbReference>
<dbReference type="PANTHER" id="PTHR11735:SF6">
    <property type="entry name" value="TRNA N6-ADENOSINE THREONYLCARBAMOYLTRANSFERASE, MITOCHONDRIAL"/>
    <property type="match status" value="1"/>
</dbReference>
<dbReference type="Pfam" id="PF00814">
    <property type="entry name" value="TsaD"/>
    <property type="match status" value="1"/>
</dbReference>
<dbReference type="PRINTS" id="PR00789">
    <property type="entry name" value="OSIALOPTASE"/>
</dbReference>
<dbReference type="SUPFAM" id="SSF53067">
    <property type="entry name" value="Actin-like ATPase domain"/>
    <property type="match status" value="2"/>
</dbReference>
<dbReference type="PROSITE" id="PS01016">
    <property type="entry name" value="GLYCOPROTEASE"/>
    <property type="match status" value="1"/>
</dbReference>
<name>TSAD_BLOFL</name>
<protein>
    <recommendedName>
        <fullName evidence="1">tRNA N6-adenosine threonylcarbamoyltransferase</fullName>
        <ecNumber evidence="1">2.3.1.234</ecNumber>
    </recommendedName>
    <alternativeName>
        <fullName evidence="1">N6-L-threonylcarbamoyladenine synthase</fullName>
        <shortName evidence="1">t(6)A synthase</shortName>
    </alternativeName>
    <alternativeName>
        <fullName evidence="1">t(6)A37 threonylcarbamoyladenosine biosynthesis protein TsaD</fullName>
    </alternativeName>
    <alternativeName>
        <fullName evidence="1">tRNA threonylcarbamoyladenosine biosynthesis protein TsaD</fullName>
    </alternativeName>
</protein>
<organism>
    <name type="scientific">Blochmanniella floridana</name>
    <dbReference type="NCBI Taxonomy" id="203907"/>
    <lineage>
        <taxon>Bacteria</taxon>
        <taxon>Pseudomonadati</taxon>
        <taxon>Pseudomonadota</taxon>
        <taxon>Gammaproteobacteria</taxon>
        <taxon>Enterobacterales</taxon>
        <taxon>Enterobacteriaceae</taxon>
        <taxon>ant endosymbionts</taxon>
        <taxon>Candidatus Blochmanniella</taxon>
    </lineage>
</organism>
<feature type="chain" id="PRO_0000303282" description="tRNA N6-adenosine threonylcarbamoyltransferase">
    <location>
        <begin position="1"/>
        <end position="353"/>
    </location>
</feature>
<feature type="binding site" evidence="1">
    <location>
        <position position="111"/>
    </location>
    <ligand>
        <name>Fe cation</name>
        <dbReference type="ChEBI" id="CHEBI:24875"/>
    </ligand>
</feature>
<feature type="binding site" evidence="1">
    <location>
        <position position="115"/>
    </location>
    <ligand>
        <name>Fe cation</name>
        <dbReference type="ChEBI" id="CHEBI:24875"/>
    </ligand>
</feature>
<feature type="binding site" evidence="1">
    <location>
        <begin position="148"/>
        <end position="152"/>
    </location>
    <ligand>
        <name>substrate</name>
    </ligand>
</feature>
<feature type="binding site" evidence="1">
    <location>
        <position position="181"/>
    </location>
    <ligand>
        <name>substrate</name>
    </ligand>
</feature>
<feature type="binding site" evidence="1">
    <location>
        <position position="194"/>
    </location>
    <ligand>
        <name>substrate</name>
    </ligand>
</feature>
<feature type="binding site" evidence="1">
    <location>
        <position position="286"/>
    </location>
    <ligand>
        <name>substrate</name>
    </ligand>
</feature>
<feature type="binding site" evidence="1">
    <location>
        <position position="314"/>
    </location>
    <ligand>
        <name>Fe cation</name>
        <dbReference type="ChEBI" id="CHEBI:24875"/>
    </ligand>
</feature>
<reference key="1">
    <citation type="journal article" date="2003" name="Proc. Natl. Acad. Sci. U.S.A.">
        <title>The genome sequence of Blochmannia floridanus: comparative analysis of reduced genomes.</title>
        <authorList>
            <person name="Gil R."/>
            <person name="Silva F.J."/>
            <person name="Zientz E."/>
            <person name="Delmotte F."/>
            <person name="Gonzalez-Candelas F."/>
            <person name="Latorre A."/>
            <person name="Rausell C."/>
            <person name="Kamerbeek J."/>
            <person name="Gadau J."/>
            <person name="Hoelldobler B."/>
            <person name="van Ham R.C.H.J."/>
            <person name="Gross R."/>
            <person name="Moya A."/>
        </authorList>
    </citation>
    <scope>NUCLEOTIDE SEQUENCE [LARGE SCALE GENOMIC DNA]</scope>
</reference>
<proteinExistence type="inferred from homology"/>
<gene>
    <name evidence="1" type="primary">tsaD</name>
    <name type="synonym">gcp</name>
    <name type="ordered locus">Bfl059</name>
</gene>
<comment type="function">
    <text evidence="1">Required for the formation of a threonylcarbamoyl group on adenosine at position 37 (t(6)A37) in tRNAs that read codons beginning with adenine. Is involved in the transfer of the threonylcarbamoyl moiety of threonylcarbamoyl-AMP (TC-AMP) to the N6 group of A37, together with TsaE and TsaB. TsaD likely plays a direct catalytic role in this reaction.</text>
</comment>
<comment type="catalytic activity">
    <reaction evidence="1">
        <text>L-threonylcarbamoyladenylate + adenosine(37) in tRNA = N(6)-L-threonylcarbamoyladenosine(37) in tRNA + AMP + H(+)</text>
        <dbReference type="Rhea" id="RHEA:37059"/>
        <dbReference type="Rhea" id="RHEA-COMP:10162"/>
        <dbReference type="Rhea" id="RHEA-COMP:10163"/>
        <dbReference type="ChEBI" id="CHEBI:15378"/>
        <dbReference type="ChEBI" id="CHEBI:73682"/>
        <dbReference type="ChEBI" id="CHEBI:74411"/>
        <dbReference type="ChEBI" id="CHEBI:74418"/>
        <dbReference type="ChEBI" id="CHEBI:456215"/>
        <dbReference type="EC" id="2.3.1.234"/>
    </reaction>
</comment>
<comment type="cofactor">
    <cofactor evidence="1">
        <name>Fe(2+)</name>
        <dbReference type="ChEBI" id="CHEBI:29033"/>
    </cofactor>
    <text evidence="1">Binds 1 Fe(2+) ion per subunit.</text>
</comment>
<comment type="subcellular location">
    <subcellularLocation>
        <location evidence="1">Cytoplasm</location>
    </subcellularLocation>
</comment>
<comment type="similarity">
    <text evidence="1">Belongs to the KAE1 / TsaD family.</text>
</comment>
<accession>Q7VQQ9</accession>